<proteinExistence type="inferred from homology"/>
<protein>
    <recommendedName>
        <fullName evidence="1">ATP-dependent helicase/deoxyribonuclease subunit B</fullName>
        <ecNumber evidence="1">3.1.-.-</ecNumber>
    </recommendedName>
    <alternativeName>
        <fullName evidence="1">ATP-dependent helicase/nuclease subunit RexB</fullName>
    </alternativeName>
</protein>
<gene>
    <name evidence="1" type="primary">rexB</name>
    <name type="ordered locus">SPN23F10540</name>
</gene>
<accession>B8ZQ31</accession>
<sequence length="1091" mass="124786">MKLLYTDIRTSLTEILTREAEELVAAGKRVFYIAPNSLSFEKERAVLECLSQQASFSITVTRFAQMARYLVLNDLPAKTTLDDIGLGLAFYKCLAELDPKDLRVYGAIKQDPQLIQQLIELYHEMTKSQMSFLDLENLTDEDKRADLLLIFEKVTAYLNQGQLAQGSQLSHLIEAIENDKVSSDFNQITLVIDGFTRFSAEEERVVDLLHGKGVEIVIGAYASKKAYTSPFSEGNLYQASVKFLHHLASKYQTPAQDCSQTHEKMDSFDKASRLLESSYDFSELALDVDEKDRENLQIWSCLTQKEELELVARSIRQKLHENSDLSYKHFRILLGDVASYQLSLKTIFDQYQIPFYLGRSEAMAHHPLTQFVESILALKRYRFRQEDLINLLRTDLYTDLSQSDIDAFEQYIRYLGINGLPAFQQIFTKSHHGKFNLERLNVLRLRILAPLETLFASRKQKAENLLQKWSVFLKEGAVTKQLQDLTTTLEAVEQERQAEVWKAFCHVLEQFATVFAGSQVSLEDFLALLHSGMSLSQYRTIPATVDTVLVQSYDLIAPLTADFVYAIGLTQDNLPKISQNTSLLTDEERQNLNQATEEGVQLLIASSENLKKNRYTMLSLVNSARKQLFLSAPSLFNESESKESAYLQELIHFGFRRREKRMNHKGLSKEDMGSYHSLLSSLVAYHQQGEMSDTEQDLTFVKVLSRVIGKKLDLQGLENPAIPTSPSSKTLAKDTLQALYPAKQEFYLSTSGLTEFYRNEYSYFLRYVLGLQEELRLRPDARSHGNFLHRIFERALQLPNEDSFDQRLEQAIQETSQEREFEAIYQESLEAQFTKEVLLDVARTTGHILRHNPAIETIKEEANFGGKDQAFIQLDNGRSVFVRGKVDRIDRLKANGAIGVVDYKSSLTQFQFPHFFNGLNSQLPTYLAALKREGKQNFFGAMYLEMAEPVQSLMAVKSLAGAVVEASKSMKYQGLFLEKESSYLGEFYNKNKANQLTDEEFQLLLDYNAYLYKKAAEKILAGRFAINPYTENGRSIAPYVQQHQAITGFEANYHLGQARFLKKLDLADGKRLVGEKLKQAWFEKIREELNR</sequence>
<comment type="function">
    <text evidence="1">The heterodimer acts as both an ATP-dependent DNA helicase and an ATP-dependent, dual-direction single-stranded exonuclease. Recognizes the chi site generating a DNA molecule suitable for the initiation of homologous recombination. This subunit has 5' -&gt; 3' nuclease activity but not helicase activity.</text>
</comment>
<comment type="cofactor">
    <cofactor evidence="1">
        <name>Mg(2+)</name>
        <dbReference type="ChEBI" id="CHEBI:18420"/>
    </cofactor>
</comment>
<comment type="subunit">
    <text evidence="1">Heterodimer of AddA and RexB.</text>
</comment>
<comment type="miscellaneous">
    <text evidence="1">Despite having helicase-like domains, this subunit does not have helicase activity.</text>
</comment>
<comment type="similarity">
    <text evidence="1">Belongs to the helicase family. AddB/RexB type 2 subfamily.</text>
</comment>
<keyword id="KW-0067">ATP-binding</keyword>
<keyword id="KW-0227">DNA damage</keyword>
<keyword id="KW-0234">DNA repair</keyword>
<keyword id="KW-0238">DNA-binding</keyword>
<keyword id="KW-0269">Exonuclease</keyword>
<keyword id="KW-0347">Helicase</keyword>
<keyword id="KW-0378">Hydrolase</keyword>
<keyword id="KW-0540">Nuclease</keyword>
<keyword id="KW-0547">Nucleotide-binding</keyword>
<name>ADDB_STRPJ</name>
<evidence type="ECO:0000255" key="1">
    <source>
        <dbReference type="HAMAP-Rule" id="MF_01453"/>
    </source>
</evidence>
<reference key="1">
    <citation type="journal article" date="2009" name="J. Bacteriol.">
        <title>Role of conjugative elements in the evolution of the multidrug-resistant pandemic clone Streptococcus pneumoniae Spain23F ST81.</title>
        <authorList>
            <person name="Croucher N.J."/>
            <person name="Walker D."/>
            <person name="Romero P."/>
            <person name="Lennard N."/>
            <person name="Paterson G.K."/>
            <person name="Bason N.C."/>
            <person name="Mitchell A.M."/>
            <person name="Quail M.A."/>
            <person name="Andrew P.W."/>
            <person name="Parkhill J."/>
            <person name="Bentley S.D."/>
            <person name="Mitchell T.J."/>
        </authorList>
    </citation>
    <scope>NUCLEOTIDE SEQUENCE [LARGE SCALE GENOMIC DNA]</scope>
    <source>
        <strain>ATCC 700669 / Spain 23F-1</strain>
    </source>
</reference>
<feature type="chain" id="PRO_0000379395" description="ATP-dependent helicase/deoxyribonuclease subunit B">
    <location>
        <begin position="1"/>
        <end position="1091"/>
    </location>
</feature>
<dbReference type="EC" id="3.1.-.-" evidence="1"/>
<dbReference type="EMBL" id="FM211187">
    <property type="protein sequence ID" value="CAR68870.1"/>
    <property type="molecule type" value="Genomic_DNA"/>
</dbReference>
<dbReference type="RefSeq" id="WP_000772339.1">
    <property type="nucleotide sequence ID" value="NC_011900.1"/>
</dbReference>
<dbReference type="SMR" id="B8ZQ31"/>
<dbReference type="KEGG" id="sne:SPN23F10540"/>
<dbReference type="HOGENOM" id="CLU_007838_0_0_9"/>
<dbReference type="GO" id="GO:0008409">
    <property type="term" value="F:5'-3' exonuclease activity"/>
    <property type="evidence" value="ECO:0007669"/>
    <property type="project" value="UniProtKB-UniRule"/>
</dbReference>
<dbReference type="GO" id="GO:0005524">
    <property type="term" value="F:ATP binding"/>
    <property type="evidence" value="ECO:0007669"/>
    <property type="project" value="UniProtKB-UniRule"/>
</dbReference>
<dbReference type="GO" id="GO:0003690">
    <property type="term" value="F:double-stranded DNA binding"/>
    <property type="evidence" value="ECO:0007669"/>
    <property type="project" value="UniProtKB-UniRule"/>
</dbReference>
<dbReference type="GO" id="GO:0004386">
    <property type="term" value="F:helicase activity"/>
    <property type="evidence" value="ECO:0007669"/>
    <property type="project" value="UniProtKB-KW"/>
</dbReference>
<dbReference type="GO" id="GO:0016817">
    <property type="term" value="F:hydrolase activity, acting on acid anhydrides"/>
    <property type="evidence" value="ECO:0007669"/>
    <property type="project" value="InterPro"/>
</dbReference>
<dbReference type="GO" id="GO:0000724">
    <property type="term" value="P:double-strand break repair via homologous recombination"/>
    <property type="evidence" value="ECO:0007669"/>
    <property type="project" value="UniProtKB-UniRule"/>
</dbReference>
<dbReference type="FunFam" id="3.40.50.300:FF:002666">
    <property type="entry name" value="ATP-dependent helicase/deoxyribonuclease subunit B"/>
    <property type="match status" value="1"/>
</dbReference>
<dbReference type="FunFam" id="3.40.50.300:FF:002815">
    <property type="entry name" value="ATP-dependent helicase/deoxyribonuclease subunit B"/>
    <property type="match status" value="1"/>
</dbReference>
<dbReference type="Gene3D" id="3.40.50.300">
    <property type="entry name" value="P-loop containing nucleotide triphosphate hydrolases"/>
    <property type="match status" value="4"/>
</dbReference>
<dbReference type="HAMAP" id="MF_01453">
    <property type="entry name" value="AddB_type2"/>
    <property type="match status" value="1"/>
</dbReference>
<dbReference type="InterPro" id="IPR049035">
    <property type="entry name" value="ADDB_N"/>
</dbReference>
<dbReference type="InterPro" id="IPR014141">
    <property type="entry name" value="DNA_helicase_suRexB"/>
</dbReference>
<dbReference type="InterPro" id="IPR027417">
    <property type="entry name" value="P-loop_NTPase"/>
</dbReference>
<dbReference type="InterPro" id="IPR038726">
    <property type="entry name" value="PDDEXK_AddAB-type"/>
</dbReference>
<dbReference type="InterPro" id="IPR011335">
    <property type="entry name" value="Restrct_endonuc-II-like"/>
</dbReference>
<dbReference type="NCBIfam" id="TIGR02774">
    <property type="entry name" value="rexB_recomb"/>
    <property type="match status" value="1"/>
</dbReference>
<dbReference type="PANTHER" id="PTHR30591">
    <property type="entry name" value="RECBCD ENZYME SUBUNIT RECC"/>
    <property type="match status" value="1"/>
</dbReference>
<dbReference type="PANTHER" id="PTHR30591:SF1">
    <property type="entry name" value="RECBCD ENZYME SUBUNIT RECC"/>
    <property type="match status" value="1"/>
</dbReference>
<dbReference type="Pfam" id="PF21445">
    <property type="entry name" value="ADDB_N"/>
    <property type="match status" value="1"/>
</dbReference>
<dbReference type="Pfam" id="PF12705">
    <property type="entry name" value="PDDEXK_1"/>
    <property type="match status" value="1"/>
</dbReference>
<dbReference type="SUPFAM" id="SSF52540">
    <property type="entry name" value="P-loop containing nucleoside triphosphate hydrolases"/>
    <property type="match status" value="1"/>
</dbReference>
<dbReference type="SUPFAM" id="SSF52980">
    <property type="entry name" value="Restriction endonuclease-like"/>
    <property type="match status" value="1"/>
</dbReference>
<organism>
    <name type="scientific">Streptococcus pneumoniae (strain ATCC 700669 / Spain 23F-1)</name>
    <dbReference type="NCBI Taxonomy" id="561276"/>
    <lineage>
        <taxon>Bacteria</taxon>
        <taxon>Bacillati</taxon>
        <taxon>Bacillota</taxon>
        <taxon>Bacilli</taxon>
        <taxon>Lactobacillales</taxon>
        <taxon>Streptococcaceae</taxon>
        <taxon>Streptococcus</taxon>
    </lineage>
</organism>